<keyword id="KW-0028">Amino-acid biosynthesis</keyword>
<keyword id="KW-0067">ATP-binding</keyword>
<keyword id="KW-0368">Histidine biosynthesis</keyword>
<keyword id="KW-0378">Hydrolase</keyword>
<keyword id="KW-0479">Metal-binding</keyword>
<keyword id="KW-0511">Multifunctional enzyme</keyword>
<keyword id="KW-0520">NAD</keyword>
<keyword id="KW-0547">Nucleotide-binding</keyword>
<keyword id="KW-0560">Oxidoreductase</keyword>
<keyword id="KW-0862">Zinc</keyword>
<protein>
    <recommendedName>
        <fullName>Histidine biosynthesis trifunctional protein</fullName>
    </recommendedName>
    <domain>
        <recommendedName>
            <fullName>Phosphoribosyl-AMP cyclohydrolase</fullName>
            <ecNumber>3.5.4.19</ecNumber>
        </recommendedName>
    </domain>
    <domain>
        <recommendedName>
            <fullName>Phosphoribosyl-ATP pyrophosphohydrolase</fullName>
            <ecNumber>3.6.1.31</ecNumber>
        </recommendedName>
    </domain>
    <domain>
        <recommendedName>
            <fullName>Histidinol dehydrogenase</fullName>
            <shortName>HDH</shortName>
            <ecNumber>1.1.1.23</ecNumber>
        </recommendedName>
    </domain>
</protein>
<evidence type="ECO:0000250" key="1"/>
<evidence type="ECO:0000305" key="2"/>
<gene>
    <name type="primary">HIS4</name>
</gene>
<organism>
    <name type="scientific">Saccharomyces bayanus</name>
    <name type="common">Yeast</name>
    <name type="synonym">Saccharomyces uvarum x Saccharomyces eubayanus</name>
    <dbReference type="NCBI Taxonomy" id="4931"/>
    <lineage>
        <taxon>Eukaryota</taxon>
        <taxon>Fungi</taxon>
        <taxon>Dikarya</taxon>
        <taxon>Ascomycota</taxon>
        <taxon>Saccharomycotina</taxon>
        <taxon>Saccharomycetes</taxon>
        <taxon>Saccharomycetales</taxon>
        <taxon>Saccharomycetaceae</taxon>
        <taxon>Saccharomyces</taxon>
    </lineage>
</organism>
<feature type="chain" id="PRO_0000135913" description="Histidine biosynthesis trifunctional protein">
    <location>
        <begin position="1"/>
        <end position="799"/>
    </location>
</feature>
<feature type="region of interest" description="Phosphoribosyl-AMP cyclohydrolase">
    <location>
        <begin position="1"/>
        <end position="229"/>
    </location>
</feature>
<feature type="region of interest" description="Phosphoribosyl-ATP pyrophosphohydrolase">
    <location>
        <begin position="230"/>
        <end position="312"/>
    </location>
</feature>
<feature type="region of interest" description="Histidinol dehydrogenase">
    <location>
        <begin position="313"/>
        <end position="799"/>
    </location>
</feature>
<feature type="active site" evidence="1">
    <location>
        <position position="687"/>
    </location>
</feature>
<feature type="active site" evidence="1">
    <location>
        <position position="688"/>
    </location>
</feature>
<feature type="binding site" evidence="1">
    <location>
        <position position="618"/>
    </location>
    <ligand>
        <name>Zn(2+)</name>
        <dbReference type="ChEBI" id="CHEBI:29105"/>
    </ligand>
</feature>
<feature type="binding site" evidence="1">
    <location>
        <position position="621"/>
    </location>
    <ligand>
        <name>Zn(2+)</name>
        <dbReference type="ChEBI" id="CHEBI:29105"/>
    </ligand>
</feature>
<feature type="binding site" evidence="1">
    <location>
        <position position="721"/>
    </location>
    <ligand>
        <name>Zn(2+)</name>
        <dbReference type="ChEBI" id="CHEBI:29105"/>
    </ligand>
</feature>
<feature type="binding site" evidence="1">
    <location>
        <position position="780"/>
    </location>
    <ligand>
        <name>Zn(2+)</name>
        <dbReference type="ChEBI" id="CHEBI:29105"/>
    </ligand>
</feature>
<accession>Q12670</accession>
<accession>Q9HFG2</accession>
<proteinExistence type="inferred from homology"/>
<sequence length="799" mass="87734">MVLPILPLIDDLASWGTKKAYASLVGQVLLDGSSLNKDEVLQFAKEEEVPLVALSLPNAKFSDDDIIAFLNNGVSSLFIASQDAKIVDHLVEELNVPKNRIVVEGNGVFHNQFLVNQKFSQDRIVSIKKLTKDLLIKEVVAEVRTDRPDGLFTTLVVDQYERCLGLVYSSKESIAKAIDLGRGVYYSRSRNEIWVKGETSGNGQKLLQISTDCDSDALKFIVEQENVGFCHLETMSCFGEFKHGLVGLESLLKQRLQDAPKESYTRRLFNDPALLDAKIKEEAEELTEAKGKQEISWEAADLFYFALAKLVTNNVSLKDVENNLNMKHLKITRRKGDAKPKFVAQAKAEEEAPTGPIHLHVVNASDKEGIKKALSRPIQKTSEIMHLVNPIIENVRDRGDSALLEYTEKFDGVKLSTPVLNAPFPEEYFEGLTEEMKDALDLSIENVRKFHAAQLPKETLEVETQPGVLCSRFPRPIEKVGLYIPGGTAILPSTALMLGVPAQVAQCKEIVFASPPRKSDGKVSPEVVYVAEKVGARMIVLAGGAQAVAAMAYGTETIPKVDKVLGPGNQFVTAAKMYVQNDTQALCSIDMPAGPSEVLVIADEDADADFVASDLLSQAEHGIDSQVILVGIKLSEKKIQEIQDAVHDQAMQLPRVDIVRKCIAHSTIILCDGYEEALEMSNKYAPEHLILQIANANDYVKLVDNAGSVFVGAYTPESCGDYSSGTNHTLPTYGYARQYSGANTATFQKFITAQNITPEGLENIGRAVMCVAKKEGLDGHRNAVKIRMSKLGLIPKDFQ</sequence>
<name>HIS2_SACBA</name>
<reference key="1">
    <citation type="submission" date="1994-08" db="EMBL/GenBank/DDBJ databases">
        <title>The polyfunctional HIS4 gene of Saccharomyces carlsbergensis: sequence and homology analysis.</title>
        <authorList>
            <person name="Porter G.L."/>
        </authorList>
    </citation>
    <scope>NUCLEOTIDE SEQUENCE [GENOMIC DNA]</scope>
</reference>
<reference key="2">
    <citation type="journal article" date="2001" name="Int. J. Syst. Evol. Microbiol.">
        <title>Analysis of the constitution of the beer yeast genome by PCR, sequencing and subtelomeric sequence hybridization.</title>
        <authorList>
            <person name="Casaregola S."/>
            <person name="Nguyen H.V."/>
            <person name="Lapathitis G."/>
            <person name="Kotyk A."/>
            <person name="Gaillardin C."/>
        </authorList>
    </citation>
    <scope>NUCLEOTIDE SEQUENCE [GENOMIC DNA] OF 1-53</scope>
    <source>
        <strain>ATCC 76513 / CBS 380 / DSM 70412 / JCM 7258 / NBRC 1127 / NRRL Y-12624</strain>
    </source>
</reference>
<comment type="catalytic activity">
    <reaction>
        <text>1-(5-phospho-beta-D-ribosyl)-5'-AMP + H2O = 1-(5-phospho-beta-D-ribosyl)-5-[(5-phospho-beta-D-ribosylamino)methylideneamino]imidazole-4-carboxamide</text>
        <dbReference type="Rhea" id="RHEA:20049"/>
        <dbReference type="ChEBI" id="CHEBI:15377"/>
        <dbReference type="ChEBI" id="CHEBI:58435"/>
        <dbReference type="ChEBI" id="CHEBI:59457"/>
        <dbReference type="EC" id="3.5.4.19"/>
    </reaction>
</comment>
<comment type="catalytic activity">
    <reaction>
        <text>1-(5-phospho-beta-D-ribosyl)-ATP + H2O = 1-(5-phospho-beta-D-ribosyl)-5'-AMP + diphosphate + H(+)</text>
        <dbReference type="Rhea" id="RHEA:22828"/>
        <dbReference type="ChEBI" id="CHEBI:15377"/>
        <dbReference type="ChEBI" id="CHEBI:15378"/>
        <dbReference type="ChEBI" id="CHEBI:33019"/>
        <dbReference type="ChEBI" id="CHEBI:59457"/>
        <dbReference type="ChEBI" id="CHEBI:73183"/>
        <dbReference type="EC" id="3.6.1.31"/>
    </reaction>
</comment>
<comment type="catalytic activity">
    <reaction>
        <text>L-histidinol + 2 NAD(+) + H2O = L-histidine + 2 NADH + 3 H(+)</text>
        <dbReference type="Rhea" id="RHEA:20641"/>
        <dbReference type="ChEBI" id="CHEBI:15377"/>
        <dbReference type="ChEBI" id="CHEBI:15378"/>
        <dbReference type="ChEBI" id="CHEBI:57540"/>
        <dbReference type="ChEBI" id="CHEBI:57595"/>
        <dbReference type="ChEBI" id="CHEBI:57699"/>
        <dbReference type="ChEBI" id="CHEBI:57945"/>
        <dbReference type="EC" id="1.1.1.23"/>
    </reaction>
</comment>
<comment type="cofactor">
    <cofactor evidence="1">
        <name>Zn(2+)</name>
        <dbReference type="ChEBI" id="CHEBI:29105"/>
    </cofactor>
    <text evidence="1">Binds 1 zinc ion.</text>
</comment>
<comment type="pathway">
    <text>Amino-acid biosynthesis; L-histidine biosynthesis; L-histidine from 5-phospho-alpha-D-ribose 1-diphosphate: step 2/9.</text>
</comment>
<comment type="pathway">
    <text>Amino-acid biosynthesis; L-histidine biosynthesis; L-histidine from 5-phospho-alpha-D-ribose 1-diphosphate: step 3/9.</text>
</comment>
<comment type="pathway">
    <text>Amino-acid biosynthesis; L-histidine biosynthesis; L-histidine from 5-phospho-alpha-D-ribose 1-diphosphate: step 9/9.</text>
</comment>
<comment type="similarity">
    <text evidence="2">In the C-terminal section; belongs to the histidinol dehydrogenase family.</text>
</comment>
<dbReference type="EC" id="3.5.4.19"/>
<dbReference type="EC" id="3.6.1.31"/>
<dbReference type="EC" id="1.1.1.23"/>
<dbReference type="EMBL" id="U13062">
    <property type="protein sequence ID" value="AAA21153.1"/>
    <property type="molecule type" value="Genomic_DNA"/>
</dbReference>
<dbReference type="EMBL" id="AJ251575">
    <property type="protein sequence ID" value="CAC16411.1"/>
    <property type="molecule type" value="Genomic_DNA"/>
</dbReference>
<dbReference type="PIR" id="S53349">
    <property type="entry name" value="S53349"/>
</dbReference>
<dbReference type="SMR" id="Q12670"/>
<dbReference type="UniPathway" id="UPA00031">
    <property type="reaction ID" value="UER00007"/>
</dbReference>
<dbReference type="UniPathway" id="UPA00031">
    <property type="reaction ID" value="UER00008"/>
</dbReference>
<dbReference type="UniPathway" id="UPA00031">
    <property type="reaction ID" value="UER00014"/>
</dbReference>
<dbReference type="GO" id="GO:0005829">
    <property type="term" value="C:cytosol"/>
    <property type="evidence" value="ECO:0007669"/>
    <property type="project" value="TreeGrafter"/>
</dbReference>
<dbReference type="GO" id="GO:0005524">
    <property type="term" value="F:ATP binding"/>
    <property type="evidence" value="ECO:0007669"/>
    <property type="project" value="UniProtKB-KW"/>
</dbReference>
<dbReference type="GO" id="GO:0004399">
    <property type="term" value="F:histidinol dehydrogenase activity"/>
    <property type="evidence" value="ECO:0007669"/>
    <property type="project" value="UniProtKB-EC"/>
</dbReference>
<dbReference type="GO" id="GO:0046872">
    <property type="term" value="F:metal ion binding"/>
    <property type="evidence" value="ECO:0007669"/>
    <property type="project" value="UniProtKB-KW"/>
</dbReference>
<dbReference type="GO" id="GO:0051287">
    <property type="term" value="F:NAD binding"/>
    <property type="evidence" value="ECO:0007669"/>
    <property type="project" value="InterPro"/>
</dbReference>
<dbReference type="GO" id="GO:0004635">
    <property type="term" value="F:phosphoribosyl-AMP cyclohydrolase activity"/>
    <property type="evidence" value="ECO:0007669"/>
    <property type="project" value="UniProtKB-EC"/>
</dbReference>
<dbReference type="GO" id="GO:0004636">
    <property type="term" value="F:phosphoribosyl-ATP diphosphatase activity"/>
    <property type="evidence" value="ECO:0007669"/>
    <property type="project" value="UniProtKB-EC"/>
</dbReference>
<dbReference type="GO" id="GO:0000105">
    <property type="term" value="P:L-histidine biosynthetic process"/>
    <property type="evidence" value="ECO:0007669"/>
    <property type="project" value="UniProtKB-UniPathway"/>
</dbReference>
<dbReference type="CDD" id="cd06572">
    <property type="entry name" value="Histidinol_dh"/>
    <property type="match status" value="1"/>
</dbReference>
<dbReference type="CDD" id="cd11546">
    <property type="entry name" value="NTP-PPase_His4"/>
    <property type="match status" value="1"/>
</dbReference>
<dbReference type="FunFam" id="1.10.287.1080:FF:000002">
    <property type="entry name" value="Histidine biosynthesis bifunctional protein HisIE"/>
    <property type="match status" value="1"/>
</dbReference>
<dbReference type="FunFam" id="1.20.5.1300:FF:000001">
    <property type="entry name" value="Histidine biosynthesis trifunctional protein"/>
    <property type="match status" value="1"/>
</dbReference>
<dbReference type="FunFam" id="3.10.20.810:FF:000002">
    <property type="entry name" value="Histidine biosynthesis trifunctional protein"/>
    <property type="match status" value="1"/>
</dbReference>
<dbReference type="FunFam" id="3.40.50.1980:FF:000050">
    <property type="entry name" value="Histidine biosynthesis trifunctional protein"/>
    <property type="match status" value="1"/>
</dbReference>
<dbReference type="FunFam" id="3.40.50.1980:FF:000001">
    <property type="entry name" value="Histidinol dehydrogenase"/>
    <property type="match status" value="1"/>
</dbReference>
<dbReference type="Gene3D" id="1.20.5.1300">
    <property type="match status" value="1"/>
</dbReference>
<dbReference type="Gene3D" id="1.10.287.1080">
    <property type="entry name" value="MazG-like"/>
    <property type="match status" value="1"/>
</dbReference>
<dbReference type="Gene3D" id="3.40.50.1980">
    <property type="entry name" value="Nitrogenase molybdenum iron protein domain"/>
    <property type="match status" value="2"/>
</dbReference>
<dbReference type="Gene3D" id="3.10.20.810">
    <property type="entry name" value="Phosphoribosyl-AMP cyclohydrolase"/>
    <property type="match status" value="1"/>
</dbReference>
<dbReference type="HAMAP" id="MF_01024">
    <property type="entry name" value="HisD"/>
    <property type="match status" value="1"/>
</dbReference>
<dbReference type="InterPro" id="IPR016161">
    <property type="entry name" value="Ald_DH/histidinol_DH"/>
</dbReference>
<dbReference type="InterPro" id="IPR008179">
    <property type="entry name" value="HisE"/>
</dbReference>
<dbReference type="InterPro" id="IPR016298">
    <property type="entry name" value="Histidine_synth_trifunct"/>
</dbReference>
<dbReference type="InterPro" id="IPR001692">
    <property type="entry name" value="Histidinol_DH_CS"/>
</dbReference>
<dbReference type="InterPro" id="IPR012131">
    <property type="entry name" value="Hstdl_DH"/>
</dbReference>
<dbReference type="InterPro" id="IPR021130">
    <property type="entry name" value="PRib-ATP_PPHydrolase-like"/>
</dbReference>
<dbReference type="InterPro" id="IPR002496">
    <property type="entry name" value="PRib_AMP_CycHydrolase_dom"/>
</dbReference>
<dbReference type="InterPro" id="IPR038019">
    <property type="entry name" value="PRib_AMP_CycHydrolase_sf"/>
</dbReference>
<dbReference type="NCBIfam" id="TIGR00069">
    <property type="entry name" value="hisD"/>
    <property type="match status" value="1"/>
</dbReference>
<dbReference type="NCBIfam" id="TIGR03188">
    <property type="entry name" value="histidine_hisI"/>
    <property type="match status" value="1"/>
</dbReference>
<dbReference type="PANTHER" id="PTHR21256:SF2">
    <property type="entry name" value="HISTIDINE BIOSYNTHESIS TRIFUNCTIONAL PROTEIN"/>
    <property type="match status" value="1"/>
</dbReference>
<dbReference type="PANTHER" id="PTHR21256">
    <property type="entry name" value="HISTIDINOL DEHYDROGENASE HDH"/>
    <property type="match status" value="1"/>
</dbReference>
<dbReference type="Pfam" id="PF00815">
    <property type="entry name" value="Histidinol_dh"/>
    <property type="match status" value="1"/>
</dbReference>
<dbReference type="Pfam" id="PF01502">
    <property type="entry name" value="PRA-CH"/>
    <property type="match status" value="1"/>
</dbReference>
<dbReference type="Pfam" id="PF01503">
    <property type="entry name" value="PRA-PH"/>
    <property type="match status" value="1"/>
</dbReference>
<dbReference type="PIRSF" id="PIRSF001257">
    <property type="entry name" value="His_trifunctional"/>
    <property type="match status" value="1"/>
</dbReference>
<dbReference type="PRINTS" id="PR00083">
    <property type="entry name" value="HOLDHDRGNASE"/>
</dbReference>
<dbReference type="SUPFAM" id="SSF53720">
    <property type="entry name" value="ALDH-like"/>
    <property type="match status" value="1"/>
</dbReference>
<dbReference type="SUPFAM" id="SSF101386">
    <property type="entry name" value="all-alpha NTP pyrophosphatases"/>
    <property type="match status" value="1"/>
</dbReference>
<dbReference type="SUPFAM" id="SSF141734">
    <property type="entry name" value="HisI-like"/>
    <property type="match status" value="1"/>
</dbReference>
<dbReference type="PROSITE" id="PS00611">
    <property type="entry name" value="HISOL_DEHYDROGENASE"/>
    <property type="match status" value="1"/>
</dbReference>